<reference key="1">
    <citation type="journal article" date="2008" name="J. Bacteriol.">
        <title>Genome sequence of the chemolithoautotrophic bacterium Oligotropha carboxidovorans OM5T.</title>
        <authorList>
            <person name="Paul D."/>
            <person name="Bridges S."/>
            <person name="Burgess S.C."/>
            <person name="Dandass Y."/>
            <person name="Lawrence M.L."/>
        </authorList>
    </citation>
    <scope>NUCLEOTIDE SEQUENCE [LARGE SCALE GENOMIC DNA]</scope>
    <source>
        <strain>ATCC 49405 / DSM 1227 / KCTC 32145 / OM5</strain>
    </source>
</reference>
<reference key="2">
    <citation type="journal article" date="2011" name="J. Bacteriol.">
        <title>Complete genome sequences of the chemolithoautotrophic Oligotropha carboxidovorans strains OM4 and OM5.</title>
        <authorList>
            <person name="Volland S."/>
            <person name="Rachinger M."/>
            <person name="Strittmatter A."/>
            <person name="Daniel R."/>
            <person name="Gottschalk G."/>
            <person name="Meyer O."/>
        </authorList>
    </citation>
    <scope>NUCLEOTIDE SEQUENCE [LARGE SCALE GENOMIC DNA]</scope>
    <source>
        <strain>ATCC 49405 / DSM 1227 / KCTC 32145 / OM5</strain>
    </source>
</reference>
<name>RLMH_AFIC5</name>
<organism>
    <name type="scientific">Afipia carboxidovorans (strain ATCC 49405 / DSM 1227 / KCTC 32145 / OM5)</name>
    <name type="common">Oligotropha carboxidovorans</name>
    <dbReference type="NCBI Taxonomy" id="504832"/>
    <lineage>
        <taxon>Bacteria</taxon>
        <taxon>Pseudomonadati</taxon>
        <taxon>Pseudomonadota</taxon>
        <taxon>Alphaproteobacteria</taxon>
        <taxon>Hyphomicrobiales</taxon>
        <taxon>Nitrobacteraceae</taxon>
        <taxon>Afipia</taxon>
    </lineage>
</organism>
<comment type="function">
    <text evidence="1">Specifically methylates the pseudouridine at position 1915 (m3Psi1915) in 23S rRNA.</text>
</comment>
<comment type="catalytic activity">
    <reaction evidence="1">
        <text>pseudouridine(1915) in 23S rRNA + S-adenosyl-L-methionine = N(3)-methylpseudouridine(1915) in 23S rRNA + S-adenosyl-L-homocysteine + H(+)</text>
        <dbReference type="Rhea" id="RHEA:42752"/>
        <dbReference type="Rhea" id="RHEA-COMP:10221"/>
        <dbReference type="Rhea" id="RHEA-COMP:10222"/>
        <dbReference type="ChEBI" id="CHEBI:15378"/>
        <dbReference type="ChEBI" id="CHEBI:57856"/>
        <dbReference type="ChEBI" id="CHEBI:59789"/>
        <dbReference type="ChEBI" id="CHEBI:65314"/>
        <dbReference type="ChEBI" id="CHEBI:74486"/>
        <dbReference type="EC" id="2.1.1.177"/>
    </reaction>
</comment>
<comment type="subunit">
    <text evidence="1">Homodimer.</text>
</comment>
<comment type="subcellular location">
    <subcellularLocation>
        <location evidence="1">Cytoplasm</location>
    </subcellularLocation>
</comment>
<comment type="similarity">
    <text evidence="1">Belongs to the RNA methyltransferase RlmH family.</text>
</comment>
<protein>
    <recommendedName>
        <fullName evidence="1">Ribosomal RNA large subunit methyltransferase H</fullName>
        <ecNumber evidence="1">2.1.1.177</ecNumber>
    </recommendedName>
    <alternativeName>
        <fullName evidence="1">23S rRNA (pseudouridine1915-N3)-methyltransferase</fullName>
    </alternativeName>
    <alternativeName>
        <fullName evidence="1">23S rRNA m3Psi1915 methyltransferase</fullName>
    </alternativeName>
    <alternativeName>
        <fullName evidence="1">rRNA (pseudouridine-N3-)-methyltransferase RlmH</fullName>
    </alternativeName>
</protein>
<evidence type="ECO:0000255" key="1">
    <source>
        <dbReference type="HAMAP-Rule" id="MF_00658"/>
    </source>
</evidence>
<gene>
    <name evidence="1" type="primary">rlmH</name>
    <name type="ordered locus">OCAR_4602</name>
    <name type="ordered locus">OCA5_c33420</name>
</gene>
<dbReference type="EC" id="2.1.1.177" evidence="1"/>
<dbReference type="EMBL" id="CP001196">
    <property type="protein sequence ID" value="ACI91746.1"/>
    <property type="molecule type" value="Genomic_DNA"/>
</dbReference>
<dbReference type="EMBL" id="CP002826">
    <property type="protein sequence ID" value="AEI08016.1"/>
    <property type="molecule type" value="Genomic_DNA"/>
</dbReference>
<dbReference type="RefSeq" id="WP_012561777.1">
    <property type="nucleotide sequence ID" value="NC_015684.1"/>
</dbReference>
<dbReference type="SMR" id="B6JD16"/>
<dbReference type="STRING" id="504832.OCA5_c33420"/>
<dbReference type="KEGG" id="oca:OCAR_4602"/>
<dbReference type="KEGG" id="ocg:OCA5_c33420"/>
<dbReference type="PATRIC" id="fig|504832.7.peg.3513"/>
<dbReference type="eggNOG" id="COG1576">
    <property type="taxonomic scope" value="Bacteria"/>
</dbReference>
<dbReference type="HOGENOM" id="CLU_100552_1_1_5"/>
<dbReference type="OrthoDB" id="9806643at2"/>
<dbReference type="Proteomes" id="UP000007730">
    <property type="component" value="Chromosome"/>
</dbReference>
<dbReference type="GO" id="GO:0005737">
    <property type="term" value="C:cytoplasm"/>
    <property type="evidence" value="ECO:0007669"/>
    <property type="project" value="UniProtKB-SubCell"/>
</dbReference>
<dbReference type="GO" id="GO:0070038">
    <property type="term" value="F:rRNA (pseudouridine-N3-)-methyltransferase activity"/>
    <property type="evidence" value="ECO:0007669"/>
    <property type="project" value="UniProtKB-UniRule"/>
</dbReference>
<dbReference type="CDD" id="cd18081">
    <property type="entry name" value="RlmH-like"/>
    <property type="match status" value="1"/>
</dbReference>
<dbReference type="Gene3D" id="3.40.1280.10">
    <property type="match status" value="1"/>
</dbReference>
<dbReference type="HAMAP" id="MF_00658">
    <property type="entry name" value="23SrRNA_methyltr_H"/>
    <property type="match status" value="1"/>
</dbReference>
<dbReference type="InterPro" id="IPR029028">
    <property type="entry name" value="Alpha/beta_knot_MTases"/>
</dbReference>
<dbReference type="InterPro" id="IPR003742">
    <property type="entry name" value="RlmH-like"/>
</dbReference>
<dbReference type="InterPro" id="IPR029026">
    <property type="entry name" value="tRNA_m1G_MTases_N"/>
</dbReference>
<dbReference type="NCBIfam" id="NF000989">
    <property type="entry name" value="PRK00103.2-3"/>
    <property type="match status" value="1"/>
</dbReference>
<dbReference type="NCBIfam" id="NF000991">
    <property type="entry name" value="PRK00103.2-5"/>
    <property type="match status" value="1"/>
</dbReference>
<dbReference type="PANTHER" id="PTHR33603">
    <property type="entry name" value="METHYLTRANSFERASE"/>
    <property type="match status" value="1"/>
</dbReference>
<dbReference type="PANTHER" id="PTHR33603:SF1">
    <property type="entry name" value="RIBOSOMAL RNA LARGE SUBUNIT METHYLTRANSFERASE H"/>
    <property type="match status" value="1"/>
</dbReference>
<dbReference type="Pfam" id="PF02590">
    <property type="entry name" value="SPOUT_MTase"/>
    <property type="match status" value="1"/>
</dbReference>
<dbReference type="PIRSF" id="PIRSF004505">
    <property type="entry name" value="MT_bac"/>
    <property type="match status" value="1"/>
</dbReference>
<dbReference type="SUPFAM" id="SSF75217">
    <property type="entry name" value="alpha/beta knot"/>
    <property type="match status" value="1"/>
</dbReference>
<proteinExistence type="inferred from homology"/>
<sequence>MRIIVIAVGRLKQGPERELAERYRERFESLGRKLGFRGLDIVELPESRHADATGRIAEEANAIAAHIPEHAAVVALSERGDNLDSATLARHLGRWRDDSVPCAVFLIGGADGLSAELSRVAKIRLAFGKATWPHQIVRILLLEQIYRAGTILAGHPYHRA</sequence>
<keyword id="KW-0963">Cytoplasm</keyword>
<keyword id="KW-0489">Methyltransferase</keyword>
<keyword id="KW-1185">Reference proteome</keyword>
<keyword id="KW-0698">rRNA processing</keyword>
<keyword id="KW-0949">S-adenosyl-L-methionine</keyword>
<keyword id="KW-0808">Transferase</keyword>
<accession>B6JD16</accession>
<accession>F8BTC4</accession>
<feature type="chain" id="PRO_0000366631" description="Ribosomal RNA large subunit methyltransferase H">
    <location>
        <begin position="1"/>
        <end position="160"/>
    </location>
</feature>
<feature type="binding site" evidence="1">
    <location>
        <position position="76"/>
    </location>
    <ligand>
        <name>S-adenosyl-L-methionine</name>
        <dbReference type="ChEBI" id="CHEBI:59789"/>
    </ligand>
</feature>
<feature type="binding site" evidence="1">
    <location>
        <position position="108"/>
    </location>
    <ligand>
        <name>S-adenosyl-L-methionine</name>
        <dbReference type="ChEBI" id="CHEBI:59789"/>
    </ligand>
</feature>